<organism>
    <name type="scientific">Escherichia coli (strain K12)</name>
    <dbReference type="NCBI Taxonomy" id="83333"/>
    <lineage>
        <taxon>Bacteria</taxon>
        <taxon>Pseudomonadati</taxon>
        <taxon>Pseudomonadota</taxon>
        <taxon>Gammaproteobacteria</taxon>
        <taxon>Enterobacterales</taxon>
        <taxon>Enterobacteriaceae</taxon>
        <taxon>Escherichia</taxon>
    </lineage>
</organism>
<name>NIMT_ECOLI</name>
<evidence type="ECO:0000255" key="1"/>
<evidence type="ECO:0000269" key="2">
    <source>
    </source>
</evidence>
<evidence type="ECO:0000269" key="3">
    <source>
    </source>
</evidence>
<evidence type="ECO:0000303" key="4">
    <source>
    </source>
</evidence>
<evidence type="ECO:0000305" key="5"/>
<keyword id="KW-0046">Antibiotic resistance</keyword>
<keyword id="KW-0997">Cell inner membrane</keyword>
<keyword id="KW-1003">Cell membrane</keyword>
<keyword id="KW-0472">Membrane</keyword>
<keyword id="KW-1185">Reference proteome</keyword>
<keyword id="KW-0812">Transmembrane</keyword>
<keyword id="KW-1133">Transmembrane helix</keyword>
<keyword id="KW-0813">Transport</keyword>
<comment type="function">
    <text evidence="3">Involved in efflux of 2-nitroimidazole.</text>
</comment>
<comment type="subcellular location">
    <subcellularLocation>
        <location evidence="2">Cell inner membrane</location>
        <topology evidence="1">Multi-pass membrane protein</topology>
    </subcellularLocation>
</comment>
<comment type="induction">
    <text evidence="3">Repressed by NimR.</text>
</comment>
<comment type="disruption phenotype">
    <text evidence="3">Mutant is sensitive to 2-nitroimidazole.</text>
</comment>
<comment type="similarity">
    <text evidence="5">Belongs to the major facilitator superfamily. Cyanate porter (TC 2.A.1.17) family.</text>
</comment>
<dbReference type="EMBL" id="U00096">
    <property type="protein sequence ID" value="AAC74861.1"/>
    <property type="molecule type" value="Genomic_DNA"/>
</dbReference>
<dbReference type="EMBL" id="AP009048">
    <property type="protein sequence ID" value="BAA15589.1"/>
    <property type="molecule type" value="Genomic_DNA"/>
</dbReference>
<dbReference type="PIR" id="G64939">
    <property type="entry name" value="G64939"/>
</dbReference>
<dbReference type="RefSeq" id="NP_416305.1">
    <property type="nucleotide sequence ID" value="NC_000913.3"/>
</dbReference>
<dbReference type="RefSeq" id="WP_000128491.1">
    <property type="nucleotide sequence ID" value="NZ_SSZK01000001.1"/>
</dbReference>
<dbReference type="SMR" id="P76242"/>
<dbReference type="BioGRID" id="4261819">
    <property type="interactions" value="164"/>
</dbReference>
<dbReference type="FunCoup" id="P76242">
    <property type="interactions" value="187"/>
</dbReference>
<dbReference type="STRING" id="511145.b1791"/>
<dbReference type="TCDB" id="2.A.1.17.3">
    <property type="family name" value="the major facilitator superfamily (mfs)"/>
</dbReference>
<dbReference type="PaxDb" id="511145-b1791"/>
<dbReference type="EnsemblBacteria" id="AAC74861">
    <property type="protein sequence ID" value="AAC74861"/>
    <property type="gene ID" value="b1791"/>
</dbReference>
<dbReference type="GeneID" id="946309"/>
<dbReference type="KEGG" id="ecj:JW1780"/>
<dbReference type="KEGG" id="eco:b1791"/>
<dbReference type="KEGG" id="ecoc:C3026_10210"/>
<dbReference type="PATRIC" id="fig|1411691.4.peg.464"/>
<dbReference type="EchoBASE" id="EB3273"/>
<dbReference type="eggNOG" id="COG2807">
    <property type="taxonomic scope" value="Bacteria"/>
</dbReference>
<dbReference type="HOGENOM" id="CLU_038046_1_0_6"/>
<dbReference type="InParanoid" id="P76242"/>
<dbReference type="OMA" id="AWQVTLY"/>
<dbReference type="OrthoDB" id="5317164at2"/>
<dbReference type="PhylomeDB" id="P76242"/>
<dbReference type="BioCyc" id="EcoCyc:B1791-MONOMER"/>
<dbReference type="BioCyc" id="MetaCyc:B1791-MONOMER"/>
<dbReference type="PRO" id="PR:P76242"/>
<dbReference type="Proteomes" id="UP000000625">
    <property type="component" value="Chromosome"/>
</dbReference>
<dbReference type="GO" id="GO:0005886">
    <property type="term" value="C:plasma membrane"/>
    <property type="evidence" value="ECO:0000314"/>
    <property type="project" value="EcoCyc"/>
</dbReference>
<dbReference type="GO" id="GO:0022857">
    <property type="term" value="F:transmembrane transporter activity"/>
    <property type="evidence" value="ECO:0007669"/>
    <property type="project" value="InterPro"/>
</dbReference>
<dbReference type="GO" id="GO:0046677">
    <property type="term" value="P:response to antibiotic"/>
    <property type="evidence" value="ECO:0000315"/>
    <property type="project" value="EcoCyc"/>
</dbReference>
<dbReference type="CDD" id="cd17409">
    <property type="entry name" value="MFS_NIMT_like"/>
    <property type="match status" value="1"/>
</dbReference>
<dbReference type="FunFam" id="1.20.1250.20:FF:000251">
    <property type="entry name" value="Inner membrane transporter YeaN"/>
    <property type="match status" value="1"/>
</dbReference>
<dbReference type="Gene3D" id="1.20.1250.20">
    <property type="entry name" value="MFS general substrate transporter like domains"/>
    <property type="match status" value="1"/>
</dbReference>
<dbReference type="InterPro" id="IPR004747">
    <property type="entry name" value="CynX-like"/>
</dbReference>
<dbReference type="InterPro" id="IPR011701">
    <property type="entry name" value="MFS"/>
</dbReference>
<dbReference type="InterPro" id="IPR052524">
    <property type="entry name" value="MFS_Cyanate_Porter"/>
</dbReference>
<dbReference type="InterPro" id="IPR020846">
    <property type="entry name" value="MFS_dom"/>
</dbReference>
<dbReference type="InterPro" id="IPR036259">
    <property type="entry name" value="MFS_trans_sf"/>
</dbReference>
<dbReference type="NCBIfam" id="TIGR00896">
    <property type="entry name" value="CynX"/>
    <property type="match status" value="1"/>
</dbReference>
<dbReference type="PANTHER" id="PTHR23523">
    <property type="match status" value="1"/>
</dbReference>
<dbReference type="PANTHER" id="PTHR23523:SF2">
    <property type="entry name" value="2-NITROIMIDAZOLE TRANSPORTER"/>
    <property type="match status" value="1"/>
</dbReference>
<dbReference type="Pfam" id="PF07690">
    <property type="entry name" value="MFS_1"/>
    <property type="match status" value="1"/>
</dbReference>
<dbReference type="SUPFAM" id="SSF103473">
    <property type="entry name" value="MFS general substrate transporter"/>
    <property type="match status" value="1"/>
</dbReference>
<dbReference type="PROSITE" id="PS50850">
    <property type="entry name" value="MFS"/>
    <property type="match status" value="1"/>
</dbReference>
<reference key="1">
    <citation type="journal article" date="1996" name="DNA Res.">
        <title>A 460-kb DNA sequence of the Escherichia coli K-12 genome corresponding to the 40.1-50.0 min region on the linkage map.</title>
        <authorList>
            <person name="Itoh T."/>
            <person name="Aiba H."/>
            <person name="Baba T."/>
            <person name="Fujita K."/>
            <person name="Hayashi K."/>
            <person name="Inada T."/>
            <person name="Isono K."/>
            <person name="Kasai H."/>
            <person name="Kimura S."/>
            <person name="Kitakawa M."/>
            <person name="Kitagawa M."/>
            <person name="Makino K."/>
            <person name="Miki T."/>
            <person name="Mizobuchi K."/>
            <person name="Mori H."/>
            <person name="Mori T."/>
            <person name="Motomura K."/>
            <person name="Nakade S."/>
            <person name="Nakamura Y."/>
            <person name="Nashimoto H."/>
            <person name="Nishio Y."/>
            <person name="Oshima T."/>
            <person name="Saito N."/>
            <person name="Sampei G."/>
            <person name="Seki Y."/>
            <person name="Sivasundaram S."/>
            <person name="Tagami H."/>
            <person name="Takeda J."/>
            <person name="Takemoto K."/>
            <person name="Wada C."/>
            <person name="Yamamoto Y."/>
            <person name="Horiuchi T."/>
        </authorList>
    </citation>
    <scope>NUCLEOTIDE SEQUENCE [LARGE SCALE GENOMIC DNA]</scope>
    <source>
        <strain>K12 / W3110 / ATCC 27325 / DSM 5911</strain>
    </source>
</reference>
<reference key="2">
    <citation type="journal article" date="1997" name="Science">
        <title>The complete genome sequence of Escherichia coli K-12.</title>
        <authorList>
            <person name="Blattner F.R."/>
            <person name="Plunkett G. III"/>
            <person name="Bloch C.A."/>
            <person name="Perna N.T."/>
            <person name="Burland V."/>
            <person name="Riley M."/>
            <person name="Collado-Vides J."/>
            <person name="Glasner J.D."/>
            <person name="Rode C.K."/>
            <person name="Mayhew G.F."/>
            <person name="Gregor J."/>
            <person name="Davis N.W."/>
            <person name="Kirkpatrick H.A."/>
            <person name="Goeden M.A."/>
            <person name="Rose D.J."/>
            <person name="Mau B."/>
            <person name="Shao Y."/>
        </authorList>
    </citation>
    <scope>NUCLEOTIDE SEQUENCE [LARGE SCALE GENOMIC DNA]</scope>
    <source>
        <strain>K12 / MG1655 / ATCC 47076</strain>
    </source>
</reference>
<reference key="3">
    <citation type="journal article" date="2006" name="Mol. Syst. Biol.">
        <title>Highly accurate genome sequences of Escherichia coli K-12 strains MG1655 and W3110.</title>
        <authorList>
            <person name="Hayashi K."/>
            <person name="Morooka N."/>
            <person name="Yamamoto Y."/>
            <person name="Fujita K."/>
            <person name="Isono K."/>
            <person name="Choi S."/>
            <person name="Ohtsubo E."/>
            <person name="Baba T."/>
            <person name="Wanner B.L."/>
            <person name="Mori H."/>
            <person name="Horiuchi T."/>
        </authorList>
    </citation>
    <scope>NUCLEOTIDE SEQUENCE [LARGE SCALE GENOMIC DNA]</scope>
    <source>
        <strain>K12 / W3110 / ATCC 27325 / DSM 5911</strain>
    </source>
</reference>
<reference key="4">
    <citation type="journal article" date="2005" name="Science">
        <title>Global topology analysis of the Escherichia coli inner membrane proteome.</title>
        <authorList>
            <person name="Daley D.O."/>
            <person name="Rapp M."/>
            <person name="Granseth E."/>
            <person name="Melen K."/>
            <person name="Drew D."/>
            <person name="von Heijne G."/>
        </authorList>
    </citation>
    <scope>TOPOLOGY [LARGE SCALE ANALYSIS]</scope>
    <scope>SUBCELLULAR LOCATION</scope>
    <source>
        <strain>K12 / MG1655 / ATCC 47076</strain>
    </source>
</reference>
<reference key="5">
    <citation type="journal article" date="2015" name="FEMS Microbiol. Lett.">
        <title>Role of transcription factor NimR (YeaM) in sensitivity control of Escherichia coli to 2-nitroimidazole.</title>
        <authorList>
            <person name="Ogasawara H."/>
            <person name="Ohe S."/>
            <person name="Ishihama A."/>
        </authorList>
    </citation>
    <scope>FUNCTION</scope>
    <scope>INDUCTION</scope>
    <scope>DISRUPTION PHENOTYPE</scope>
    <source>
        <strain>K12</strain>
    </source>
</reference>
<protein>
    <recommendedName>
        <fullName evidence="4">2-nitroimidazole transporter</fullName>
    </recommendedName>
</protein>
<accession>P76242</accession>
<accession>O07966</accession>
<accession>O07968</accession>
<feature type="chain" id="PRO_0000205709" description="2-nitroimidazole transporter">
    <location>
        <begin position="1"/>
        <end position="393"/>
    </location>
</feature>
<feature type="topological domain" description="Cytoplasmic" evidence="5">
    <location>
        <begin position="1"/>
        <end position="12"/>
    </location>
</feature>
<feature type="transmembrane region" description="Helical" evidence="1">
    <location>
        <begin position="13"/>
        <end position="33"/>
    </location>
</feature>
<feature type="topological domain" description="Periplasmic" evidence="5">
    <location>
        <begin position="34"/>
        <end position="52"/>
    </location>
</feature>
<feature type="transmembrane region" description="Helical" evidence="1">
    <location>
        <begin position="53"/>
        <end position="73"/>
    </location>
</feature>
<feature type="topological domain" description="Cytoplasmic" evidence="5">
    <location>
        <begin position="74"/>
        <end position="80"/>
    </location>
</feature>
<feature type="transmembrane region" description="Helical" evidence="1">
    <location>
        <begin position="81"/>
        <end position="101"/>
    </location>
</feature>
<feature type="transmembrane region" description="Helical" evidence="1">
    <location>
        <begin position="102"/>
        <end position="122"/>
    </location>
</feature>
<feature type="topological domain" description="Cytoplasmic" evidence="5">
    <location>
        <begin position="123"/>
        <end position="140"/>
    </location>
</feature>
<feature type="transmembrane region" description="Helical" evidence="1">
    <location>
        <begin position="141"/>
        <end position="161"/>
    </location>
</feature>
<feature type="topological domain" description="Periplasmic" evidence="5">
    <location>
        <begin position="162"/>
        <end position="163"/>
    </location>
</feature>
<feature type="transmembrane region" description="Helical" evidence="1">
    <location>
        <begin position="164"/>
        <end position="184"/>
    </location>
</feature>
<feature type="topological domain" description="Cytoplasmic" evidence="5">
    <location>
        <begin position="185"/>
        <end position="218"/>
    </location>
</feature>
<feature type="transmembrane region" description="Helical" evidence="1">
    <location>
        <begin position="219"/>
        <end position="239"/>
    </location>
</feature>
<feature type="topological domain" description="Periplasmic" evidence="5">
    <location>
        <begin position="240"/>
        <end position="249"/>
    </location>
</feature>
<feature type="transmembrane region" description="Helical" evidence="1">
    <location>
        <begin position="250"/>
        <end position="270"/>
    </location>
</feature>
<feature type="topological domain" description="Cytoplasmic" evidence="5">
    <location>
        <begin position="271"/>
        <end position="278"/>
    </location>
</feature>
<feature type="transmembrane region" description="Helical" evidence="1">
    <location>
        <begin position="279"/>
        <end position="299"/>
    </location>
</feature>
<feature type="topological domain" description="Periplasmic" evidence="5">
    <location>
        <begin position="300"/>
        <end position="304"/>
    </location>
</feature>
<feature type="transmembrane region" description="Helical" evidence="1">
    <location>
        <begin position="305"/>
        <end position="325"/>
    </location>
</feature>
<feature type="topological domain" description="Cytoplasmic" evidence="5">
    <location>
        <begin position="326"/>
        <end position="334"/>
    </location>
</feature>
<feature type="transmembrane region" description="Helical" evidence="1">
    <location>
        <begin position="335"/>
        <end position="355"/>
    </location>
</feature>
<feature type="topological domain" description="Periplasmic" evidence="5">
    <location>
        <begin position="356"/>
        <end position="366"/>
    </location>
</feature>
<feature type="transmembrane region" description="Helical" evidence="1">
    <location>
        <begin position="367"/>
        <end position="387"/>
    </location>
</feature>
<feature type="topological domain" description="Cytoplasmic" evidence="2">
    <location>
        <begin position="388"/>
        <end position="393"/>
    </location>
</feature>
<gene>
    <name evidence="4" type="primary">nimT</name>
    <name type="synonym">yeaN</name>
    <name type="ordered locus">b1791</name>
    <name type="ordered locus">JW1780</name>
</gene>
<proteinExistence type="evidence at protein level"/>
<sequence>MTCSTSLSGKNRIVLIAGILMIATTLRVTFTGAAPLLDTIRSAYSLTTAQTGLLTTLPLLAFALISPLAAPVARRFGMERSLFAALLLICAGIAIRSLPSPYLLFGGTAVIGGGIALGNVLLPGLIKRDFPHSVARLTGAYSLTMGAAAALGSAMVVPLALNGFGWQGALLMLMCFPLLALFLWLPQWRSQQHANLSTSRALHTRGIWRSPLAWQVTLFLGINSLVYYVIIGWLPAILISHGYSEAQAGSLHGLLQLATAAPGLLIPLFLHHVKDQRGIAAFVALMCAVGAVGLCFMPAHAITWTLLFGFGSGATMILGLTFIGLRASSAHQAAALSGMAQSVGYLLAACGPPLMGKIHDANGNWSVPLMGVAILSLLMAIFGLCAGRDKEIR</sequence>